<organism>
    <name type="scientific">Candida glabrata (strain ATCC 2001 / BCRC 20586 / JCM 3761 / NBRC 0622 / NRRL Y-65 / CBS 138)</name>
    <name type="common">Yeast</name>
    <name type="synonym">Nakaseomyces glabratus</name>
    <dbReference type="NCBI Taxonomy" id="284593"/>
    <lineage>
        <taxon>Eukaryota</taxon>
        <taxon>Fungi</taxon>
        <taxon>Dikarya</taxon>
        <taxon>Ascomycota</taxon>
        <taxon>Saccharomycotina</taxon>
        <taxon>Saccharomycetes</taxon>
        <taxon>Saccharomycetales</taxon>
        <taxon>Saccharomycetaceae</taxon>
        <taxon>Nakaseomyces</taxon>
    </lineage>
</organism>
<gene>
    <name type="primary">HAT2</name>
    <name type="ordered locus">CAGL0B03575g</name>
</gene>
<name>HAT2_CANGA</name>
<protein>
    <recommendedName>
        <fullName>Histone acetyltransferase type B subunit 2</fullName>
    </recommendedName>
</protein>
<sequence>MSVQLDPSALQKMAEVAAAAEQQSNEPMTVDEEYELWKSNVPMLYDFVSETRLTWPTLTVEWLPQKNLVAARTRQQLILGTHTSGEEQNYLKIGAVDLPVEVTENSKKDREIDEEDEDMVLSNVKIVKKFPHDGEITRARYMPQDDNIIATINGEGKIFIYDRSKNGVEALLSTLEYHTENGYGLAFNANEKYSLLSGSDDSNIALWDISNFEKNIKPTITFEDAHTDIINDVKWHSSEAHIFGSVSEDSTMKLFDKRSSQIIHNINTKKPYNTLAFSPFSSNLFAAAGTDNLVYLYDIRDVSNPLYAMTGHEDAVTAIEFDPNNDGILYSSGSDRRTIVWDLQEIGAEQTQDEIEDGPPEVLMIHAGHKTSINDIAVNPNINWLVASAEEDNIVQIWKCSSNIPRIGGEPEVDLSILD</sequence>
<evidence type="ECO:0000250" key="1"/>
<evidence type="ECO:0000250" key="2">
    <source>
        <dbReference type="UniProtKB" id="P39984"/>
    </source>
</evidence>
<evidence type="ECO:0000305" key="3"/>
<proteinExistence type="inferred from homology"/>
<comment type="function">
    <text evidence="2">Regulatory subunit of the histone acetylase B (HAT-B) complex. The complex acetylates Lys-12 of histone H4 which is required for telomeric silencing.</text>
</comment>
<comment type="subunit">
    <text evidence="2">Component of the HAT-B complex composed of at least HAT1 and HAT2. The HAT-B complex binds to histone H4 tail.</text>
</comment>
<comment type="subcellular location">
    <subcellularLocation>
        <location evidence="1">Cytoplasm</location>
    </subcellularLocation>
    <subcellularLocation>
        <location evidence="1">Nucleus</location>
    </subcellularLocation>
</comment>
<comment type="similarity">
    <text evidence="3">Belongs to the WD repeat RBAP46/RBAP48/MSI1 family.</text>
</comment>
<feature type="chain" id="PRO_0000227736" description="Histone acetyltransferase type B subunit 2">
    <location>
        <begin position="1"/>
        <end position="419"/>
    </location>
</feature>
<feature type="repeat" description="WD 1">
    <location>
        <begin position="131"/>
        <end position="171"/>
    </location>
</feature>
<feature type="repeat" description="WD 2">
    <location>
        <begin position="177"/>
        <end position="217"/>
    </location>
</feature>
<feature type="repeat" description="WD 3">
    <location>
        <begin position="225"/>
        <end position="265"/>
    </location>
</feature>
<feature type="repeat" description="WD 4">
    <location>
        <begin position="267"/>
        <end position="307"/>
    </location>
</feature>
<feature type="repeat" description="WD 5">
    <location>
        <begin position="311"/>
        <end position="351"/>
    </location>
</feature>
<feature type="repeat" description="WD 6">
    <location>
        <begin position="368"/>
        <end position="408"/>
    </location>
</feature>
<feature type="region of interest" description="Interaction with the histone H4 N-terminus" evidence="2">
    <location>
        <begin position="353"/>
        <end position="357"/>
    </location>
</feature>
<feature type="site" description="Important for interaction with HAT1" evidence="2">
    <location>
        <position position="284"/>
    </location>
</feature>
<accession>Q6FXI8</accession>
<dbReference type="EMBL" id="CR380948">
    <property type="protein sequence ID" value="CAG58027.1"/>
    <property type="molecule type" value="Genomic_DNA"/>
</dbReference>
<dbReference type="RefSeq" id="XP_445127.1">
    <property type="nucleotide sequence ID" value="XM_445127.1"/>
</dbReference>
<dbReference type="SMR" id="Q6FXI8"/>
<dbReference type="FunCoup" id="Q6FXI8">
    <property type="interactions" value="1147"/>
</dbReference>
<dbReference type="STRING" id="284593.Q6FXI8"/>
<dbReference type="EnsemblFungi" id="CAGL0B03575g-T">
    <property type="protein sequence ID" value="CAGL0B03575g-T-p1"/>
    <property type="gene ID" value="CAGL0B03575g"/>
</dbReference>
<dbReference type="KEGG" id="cgr:2886650"/>
<dbReference type="CGD" id="CAL0127754">
    <property type="gene designation" value="CAGL0B03575g"/>
</dbReference>
<dbReference type="VEuPathDB" id="FungiDB:CAGL0B03575g"/>
<dbReference type="eggNOG" id="KOG0264">
    <property type="taxonomic scope" value="Eukaryota"/>
</dbReference>
<dbReference type="HOGENOM" id="CLU_020445_3_1_1"/>
<dbReference type="InParanoid" id="Q6FXI8"/>
<dbReference type="OMA" id="KIRAMPA"/>
<dbReference type="Proteomes" id="UP000002428">
    <property type="component" value="Chromosome B"/>
</dbReference>
<dbReference type="GO" id="GO:0000781">
    <property type="term" value="C:chromosome, telomeric region"/>
    <property type="evidence" value="ECO:0007669"/>
    <property type="project" value="GOC"/>
</dbReference>
<dbReference type="GO" id="GO:0005737">
    <property type="term" value="C:cytoplasm"/>
    <property type="evidence" value="ECO:0007669"/>
    <property type="project" value="UniProtKB-SubCell"/>
</dbReference>
<dbReference type="GO" id="GO:0000123">
    <property type="term" value="C:histone acetyltransferase complex"/>
    <property type="evidence" value="ECO:0007669"/>
    <property type="project" value="EnsemblFungi"/>
</dbReference>
<dbReference type="GO" id="GO:0005634">
    <property type="term" value="C:nucleus"/>
    <property type="evidence" value="ECO:0007669"/>
    <property type="project" value="UniProtKB-SubCell"/>
</dbReference>
<dbReference type="GO" id="GO:0004402">
    <property type="term" value="F:histone acetyltransferase activity"/>
    <property type="evidence" value="ECO:0007669"/>
    <property type="project" value="EnsemblFungi"/>
</dbReference>
<dbReference type="GO" id="GO:0042393">
    <property type="term" value="F:histone binding"/>
    <property type="evidence" value="ECO:0007669"/>
    <property type="project" value="EnsemblFungi"/>
</dbReference>
<dbReference type="GO" id="GO:0031509">
    <property type="term" value="P:subtelomeric heterochromatin formation"/>
    <property type="evidence" value="ECO:0007669"/>
    <property type="project" value="EnsemblFungi"/>
</dbReference>
<dbReference type="Gene3D" id="2.130.10.10">
    <property type="entry name" value="YVTN repeat-like/Quinoprotein amine dehydrogenase"/>
    <property type="match status" value="1"/>
</dbReference>
<dbReference type="InterPro" id="IPR022052">
    <property type="entry name" value="Histone-bd_RBBP4-like_N"/>
</dbReference>
<dbReference type="InterPro" id="IPR015943">
    <property type="entry name" value="WD40/YVTN_repeat-like_dom_sf"/>
</dbReference>
<dbReference type="InterPro" id="IPR019775">
    <property type="entry name" value="WD40_repeat_CS"/>
</dbReference>
<dbReference type="InterPro" id="IPR036322">
    <property type="entry name" value="WD40_repeat_dom_sf"/>
</dbReference>
<dbReference type="InterPro" id="IPR001680">
    <property type="entry name" value="WD40_rpt"/>
</dbReference>
<dbReference type="InterPro" id="IPR050459">
    <property type="entry name" value="WD_repeat_RBAP46/RBAP48/MSI1"/>
</dbReference>
<dbReference type="PANTHER" id="PTHR22850">
    <property type="entry name" value="WD40 REPEAT FAMILY"/>
    <property type="match status" value="1"/>
</dbReference>
<dbReference type="Pfam" id="PF12265">
    <property type="entry name" value="CAF1C_H4-bd"/>
    <property type="match status" value="1"/>
</dbReference>
<dbReference type="Pfam" id="PF00400">
    <property type="entry name" value="WD40"/>
    <property type="match status" value="4"/>
</dbReference>
<dbReference type="SMART" id="SM00320">
    <property type="entry name" value="WD40"/>
    <property type="match status" value="6"/>
</dbReference>
<dbReference type="SUPFAM" id="SSF50978">
    <property type="entry name" value="WD40 repeat-like"/>
    <property type="match status" value="1"/>
</dbReference>
<dbReference type="PROSITE" id="PS00678">
    <property type="entry name" value="WD_REPEATS_1"/>
    <property type="match status" value="2"/>
</dbReference>
<dbReference type="PROSITE" id="PS50082">
    <property type="entry name" value="WD_REPEATS_2"/>
    <property type="match status" value="3"/>
</dbReference>
<dbReference type="PROSITE" id="PS50294">
    <property type="entry name" value="WD_REPEATS_REGION"/>
    <property type="match status" value="1"/>
</dbReference>
<keyword id="KW-0156">Chromatin regulator</keyword>
<keyword id="KW-0963">Cytoplasm</keyword>
<keyword id="KW-0539">Nucleus</keyword>
<keyword id="KW-1185">Reference proteome</keyword>
<keyword id="KW-0677">Repeat</keyword>
<keyword id="KW-0853">WD repeat</keyword>
<reference key="1">
    <citation type="journal article" date="2004" name="Nature">
        <title>Genome evolution in yeasts.</title>
        <authorList>
            <person name="Dujon B."/>
            <person name="Sherman D."/>
            <person name="Fischer G."/>
            <person name="Durrens P."/>
            <person name="Casaregola S."/>
            <person name="Lafontaine I."/>
            <person name="de Montigny J."/>
            <person name="Marck C."/>
            <person name="Neuveglise C."/>
            <person name="Talla E."/>
            <person name="Goffard N."/>
            <person name="Frangeul L."/>
            <person name="Aigle M."/>
            <person name="Anthouard V."/>
            <person name="Babour A."/>
            <person name="Barbe V."/>
            <person name="Barnay S."/>
            <person name="Blanchin S."/>
            <person name="Beckerich J.-M."/>
            <person name="Beyne E."/>
            <person name="Bleykasten C."/>
            <person name="Boisrame A."/>
            <person name="Boyer J."/>
            <person name="Cattolico L."/>
            <person name="Confanioleri F."/>
            <person name="de Daruvar A."/>
            <person name="Despons L."/>
            <person name="Fabre E."/>
            <person name="Fairhead C."/>
            <person name="Ferry-Dumazet H."/>
            <person name="Groppi A."/>
            <person name="Hantraye F."/>
            <person name="Hennequin C."/>
            <person name="Jauniaux N."/>
            <person name="Joyet P."/>
            <person name="Kachouri R."/>
            <person name="Kerrest A."/>
            <person name="Koszul R."/>
            <person name="Lemaire M."/>
            <person name="Lesur I."/>
            <person name="Ma L."/>
            <person name="Muller H."/>
            <person name="Nicaud J.-M."/>
            <person name="Nikolski M."/>
            <person name="Oztas S."/>
            <person name="Ozier-Kalogeropoulos O."/>
            <person name="Pellenz S."/>
            <person name="Potier S."/>
            <person name="Richard G.-F."/>
            <person name="Straub M.-L."/>
            <person name="Suleau A."/>
            <person name="Swennen D."/>
            <person name="Tekaia F."/>
            <person name="Wesolowski-Louvel M."/>
            <person name="Westhof E."/>
            <person name="Wirth B."/>
            <person name="Zeniou-Meyer M."/>
            <person name="Zivanovic Y."/>
            <person name="Bolotin-Fukuhara M."/>
            <person name="Thierry A."/>
            <person name="Bouchier C."/>
            <person name="Caudron B."/>
            <person name="Scarpelli C."/>
            <person name="Gaillardin C."/>
            <person name="Weissenbach J."/>
            <person name="Wincker P."/>
            <person name="Souciet J.-L."/>
        </authorList>
    </citation>
    <scope>NUCLEOTIDE SEQUENCE [LARGE SCALE GENOMIC DNA]</scope>
    <source>
        <strain>ATCC 2001 / BCRC 20586 / JCM 3761 / NBRC 0622 / NRRL Y-65 / CBS 138</strain>
    </source>
</reference>